<reference key="1">
    <citation type="journal article" date="2004" name="Proc. Natl. Acad. Sci. U.S.A.">
        <title>Insights into the evolution of Yersinia pestis through whole-genome comparison with Yersinia pseudotuberculosis.</title>
        <authorList>
            <person name="Chain P.S.G."/>
            <person name="Carniel E."/>
            <person name="Larimer F.W."/>
            <person name="Lamerdin J."/>
            <person name="Stoutland P.O."/>
            <person name="Regala W.M."/>
            <person name="Georgescu A.M."/>
            <person name="Vergez L.M."/>
            <person name="Land M.L."/>
            <person name="Motin V.L."/>
            <person name="Brubaker R.R."/>
            <person name="Fowler J."/>
            <person name="Hinnebusch J."/>
            <person name="Marceau M."/>
            <person name="Medigue C."/>
            <person name="Simonet M."/>
            <person name="Chenal-Francisque V."/>
            <person name="Souza B."/>
            <person name="Dacheux D."/>
            <person name="Elliott J.M."/>
            <person name="Derbise A."/>
            <person name="Hauser L.J."/>
            <person name="Garcia E."/>
        </authorList>
    </citation>
    <scope>NUCLEOTIDE SEQUENCE [LARGE SCALE GENOMIC DNA]</scope>
    <source>
        <strain>IP32953</strain>
    </source>
</reference>
<accession>Q66FH0</accession>
<protein>
    <recommendedName>
        <fullName evidence="1">4-hydroxybenzoate octaprenyltransferase</fullName>
        <ecNumber evidence="1">2.5.1.39</ecNumber>
    </recommendedName>
    <alternativeName>
        <fullName evidence="1">4-HB polyprenyltransferase</fullName>
    </alternativeName>
</protein>
<proteinExistence type="inferred from homology"/>
<dbReference type="EC" id="2.5.1.39" evidence="1"/>
<dbReference type="EMBL" id="BX936398">
    <property type="protein sequence ID" value="CAH19607.1"/>
    <property type="molecule type" value="Genomic_DNA"/>
</dbReference>
<dbReference type="RefSeq" id="WP_002209088.1">
    <property type="nucleotide sequence ID" value="NZ_CP009712.1"/>
</dbReference>
<dbReference type="SMR" id="Q66FH0"/>
<dbReference type="GeneID" id="57974293"/>
<dbReference type="KEGG" id="ypo:BZ17_2203"/>
<dbReference type="KEGG" id="yps:YPTB0367"/>
<dbReference type="PATRIC" id="fig|273123.14.peg.2332"/>
<dbReference type="UniPathway" id="UPA00232"/>
<dbReference type="Proteomes" id="UP000001011">
    <property type="component" value="Chromosome"/>
</dbReference>
<dbReference type="GO" id="GO:0005886">
    <property type="term" value="C:plasma membrane"/>
    <property type="evidence" value="ECO:0007669"/>
    <property type="project" value="UniProtKB-SubCell"/>
</dbReference>
<dbReference type="GO" id="GO:0008412">
    <property type="term" value="F:4-hydroxybenzoate polyprenyltransferase activity"/>
    <property type="evidence" value="ECO:0007669"/>
    <property type="project" value="UniProtKB-UniRule"/>
</dbReference>
<dbReference type="GO" id="GO:0006744">
    <property type="term" value="P:ubiquinone biosynthetic process"/>
    <property type="evidence" value="ECO:0007669"/>
    <property type="project" value="UniProtKB-UniRule"/>
</dbReference>
<dbReference type="CDD" id="cd13959">
    <property type="entry name" value="PT_UbiA_COQ2"/>
    <property type="match status" value="1"/>
</dbReference>
<dbReference type="FunFam" id="1.10.357.140:FF:000002">
    <property type="entry name" value="4-hydroxybenzoate octaprenyltransferase"/>
    <property type="match status" value="1"/>
</dbReference>
<dbReference type="FunFam" id="1.20.120.1780:FF:000001">
    <property type="entry name" value="4-hydroxybenzoate octaprenyltransferase"/>
    <property type="match status" value="1"/>
</dbReference>
<dbReference type="Gene3D" id="1.10.357.140">
    <property type="entry name" value="UbiA prenyltransferase"/>
    <property type="match status" value="1"/>
</dbReference>
<dbReference type="Gene3D" id="1.20.120.1780">
    <property type="entry name" value="UbiA prenyltransferase"/>
    <property type="match status" value="1"/>
</dbReference>
<dbReference type="HAMAP" id="MF_01635">
    <property type="entry name" value="UbiA"/>
    <property type="match status" value="1"/>
</dbReference>
<dbReference type="InterPro" id="IPR006370">
    <property type="entry name" value="HB_polyprenyltransferase-like"/>
</dbReference>
<dbReference type="InterPro" id="IPR039653">
    <property type="entry name" value="Prenyltransferase"/>
</dbReference>
<dbReference type="InterPro" id="IPR000537">
    <property type="entry name" value="UbiA_prenyltransferase"/>
</dbReference>
<dbReference type="InterPro" id="IPR030470">
    <property type="entry name" value="UbiA_prenylTrfase_CS"/>
</dbReference>
<dbReference type="InterPro" id="IPR044878">
    <property type="entry name" value="UbiA_sf"/>
</dbReference>
<dbReference type="NCBIfam" id="TIGR01474">
    <property type="entry name" value="ubiA_proteo"/>
    <property type="match status" value="1"/>
</dbReference>
<dbReference type="PANTHER" id="PTHR11048:SF28">
    <property type="entry name" value="4-HYDROXYBENZOATE POLYPRENYLTRANSFERASE, MITOCHONDRIAL"/>
    <property type="match status" value="1"/>
</dbReference>
<dbReference type="PANTHER" id="PTHR11048">
    <property type="entry name" value="PRENYLTRANSFERASES"/>
    <property type="match status" value="1"/>
</dbReference>
<dbReference type="Pfam" id="PF01040">
    <property type="entry name" value="UbiA"/>
    <property type="match status" value="1"/>
</dbReference>
<dbReference type="PROSITE" id="PS00943">
    <property type="entry name" value="UBIA"/>
    <property type="match status" value="1"/>
</dbReference>
<comment type="function">
    <text evidence="1">Catalyzes the prenylation of para-hydroxybenzoate (PHB) with an all-trans polyprenyl group. Mediates the second step in the final reaction sequence of ubiquinone-8 (UQ-8) biosynthesis, which is the condensation of the polyisoprenoid side chain with PHB, generating the first membrane-bound Q intermediate 3-octaprenyl-4-hydroxybenzoate.</text>
</comment>
<comment type="catalytic activity">
    <reaction evidence="1">
        <text>all-trans-octaprenyl diphosphate + 4-hydroxybenzoate = 4-hydroxy-3-(all-trans-octaprenyl)benzoate + diphosphate</text>
        <dbReference type="Rhea" id="RHEA:27782"/>
        <dbReference type="ChEBI" id="CHEBI:1617"/>
        <dbReference type="ChEBI" id="CHEBI:17879"/>
        <dbReference type="ChEBI" id="CHEBI:33019"/>
        <dbReference type="ChEBI" id="CHEBI:57711"/>
        <dbReference type="EC" id="2.5.1.39"/>
    </reaction>
</comment>
<comment type="cofactor">
    <cofactor evidence="1">
        <name>Mg(2+)</name>
        <dbReference type="ChEBI" id="CHEBI:18420"/>
    </cofactor>
</comment>
<comment type="pathway">
    <text evidence="1">Cofactor biosynthesis; ubiquinone biosynthesis.</text>
</comment>
<comment type="subcellular location">
    <subcellularLocation>
        <location evidence="1">Cell inner membrane</location>
        <topology evidence="1">Multi-pass membrane protein</topology>
    </subcellularLocation>
</comment>
<comment type="similarity">
    <text evidence="1">Belongs to the UbiA prenyltransferase family.</text>
</comment>
<name>UBIA_YERPS</name>
<feature type="chain" id="PRO_0000262865" description="4-hydroxybenzoate octaprenyltransferase">
    <location>
        <begin position="1"/>
        <end position="288"/>
    </location>
</feature>
<feature type="transmembrane region" description="Helical" evidence="1">
    <location>
        <begin position="23"/>
        <end position="43"/>
    </location>
</feature>
<feature type="transmembrane region" description="Helical" evidence="1">
    <location>
        <begin position="46"/>
        <end position="66"/>
    </location>
</feature>
<feature type="transmembrane region" description="Helical" evidence="1">
    <location>
        <begin position="98"/>
        <end position="118"/>
    </location>
</feature>
<feature type="transmembrane region" description="Helical" evidence="1">
    <location>
        <begin position="141"/>
        <end position="161"/>
    </location>
</feature>
<feature type="transmembrane region" description="Helical" evidence="1">
    <location>
        <begin position="163"/>
        <end position="183"/>
    </location>
</feature>
<feature type="transmembrane region" description="Helical" evidence="1">
    <location>
        <begin position="213"/>
        <end position="233"/>
    </location>
</feature>
<feature type="transmembrane region" description="Helical" evidence="1">
    <location>
        <begin position="234"/>
        <end position="254"/>
    </location>
</feature>
<feature type="transmembrane region" description="Helical" evidence="1">
    <location>
        <begin position="268"/>
        <end position="288"/>
    </location>
</feature>
<organism>
    <name type="scientific">Yersinia pseudotuberculosis serotype I (strain IP32953)</name>
    <dbReference type="NCBI Taxonomy" id="273123"/>
    <lineage>
        <taxon>Bacteria</taxon>
        <taxon>Pseudomonadati</taxon>
        <taxon>Pseudomonadota</taxon>
        <taxon>Gammaproteobacteria</taxon>
        <taxon>Enterobacterales</taxon>
        <taxon>Yersiniaceae</taxon>
        <taxon>Yersinia</taxon>
    </lineage>
</organism>
<sequence length="288" mass="32280">MKGSTVHTKWQAYCRLMRIDKPIGSLLLLWPTLWALWLAGRGIPEAKILVVFVLGVFFMRAAGCVVNDYADRHIDGFVKRTASRPLPSGTISEKESKILFVVLILLSFGLVLTLNSMTIWLSLAALALAWIYPFMKRVTHLPQVVLGAAFGWSIPMGFAAVSESLPLVCWLLLLANICWTVAYDTQYAMVDRDDDLRIGVKSTAILFGQHDKLIIGLLQLATLLLMVAIGWLMNLGGAFYWSILLAGALFTHQQKMIAQREREPCFRAFLNNNYVGLVLFLGILISYW</sequence>
<gene>
    <name evidence="1" type="primary">ubiA</name>
    <name type="ordered locus">YPTB0367</name>
</gene>
<evidence type="ECO:0000255" key="1">
    <source>
        <dbReference type="HAMAP-Rule" id="MF_01635"/>
    </source>
</evidence>
<keyword id="KW-0997">Cell inner membrane</keyword>
<keyword id="KW-1003">Cell membrane</keyword>
<keyword id="KW-0460">Magnesium</keyword>
<keyword id="KW-0472">Membrane</keyword>
<keyword id="KW-0808">Transferase</keyword>
<keyword id="KW-0812">Transmembrane</keyword>
<keyword id="KW-1133">Transmembrane helix</keyword>
<keyword id="KW-0831">Ubiquinone biosynthesis</keyword>